<gene>
    <name evidence="5" type="primary">FDX2</name>
    <name evidence="4" type="synonym">pFD2</name>
    <name evidence="6" type="ORF">GRMZM2G048313</name>
</gene>
<reference key="1">
    <citation type="journal article" date="1999" name="Plant Physiol.">
        <title>Complementary DNA cloning and characterization of ferredoxin localized in bundle-sheath cells of maize leaves.</title>
        <authorList>
            <person name="Matsumura T."/>
            <person name="Kimata-Ariga Y."/>
            <person name="Sakakibara H."/>
            <person name="Sugiyama T."/>
            <person name="Murata H."/>
            <person name="Takao T."/>
            <person name="Shimonishi Y."/>
            <person name="Hase T."/>
        </authorList>
    </citation>
    <scope>NUCLEOTIDE SEQUENCE [MRNA]</scope>
    <scope>IDENTIFICATION BY MASS SPECTROMETRY</scope>
    <scope>FUNCTION</scope>
    <scope>TISSUE SPECIFICITY</scope>
    <scope>BIOPHYSICOCHEMICAL PROPERTIES</scope>
    <scope>MUTAGENESIS OF ASN-109</scope>
    <scope>SUBCELLULAR LOCATION</scope>
    <source>
        <strain>cv. Golden cross Bantam T51</strain>
    </source>
</reference>
<reference key="2">
    <citation type="submission" date="2007-12" db="EMBL/GenBank/DDBJ databases">
        <title>Chloroplast precursor of maize ferredoxin 2 (Fd II).</title>
        <authorList>
            <person name="Cheng Y."/>
            <person name="Liu Z."/>
            <person name="Fan Z."/>
        </authorList>
    </citation>
    <scope>NUCLEOTIDE SEQUENCE [MRNA]</scope>
</reference>
<reference key="3">
    <citation type="journal article" date="2009" name="Science">
        <title>The B73 maize genome: complexity, diversity, and dynamics.</title>
        <authorList>
            <person name="Schnable P.S."/>
            <person name="Ware D."/>
            <person name="Fulton R.S."/>
            <person name="Stein J.C."/>
            <person name="Wei F."/>
            <person name="Pasternak S."/>
            <person name="Liang C."/>
            <person name="Zhang J."/>
            <person name="Fulton L."/>
            <person name="Graves T.A."/>
            <person name="Minx P."/>
            <person name="Reily A.D."/>
            <person name="Courtney L."/>
            <person name="Kruchowski S.S."/>
            <person name="Tomlinson C."/>
            <person name="Strong C."/>
            <person name="Delehaunty K."/>
            <person name="Fronick C."/>
            <person name="Courtney B."/>
            <person name="Rock S.M."/>
            <person name="Belter E."/>
            <person name="Du F."/>
            <person name="Kim K."/>
            <person name="Abbott R.M."/>
            <person name="Cotton M."/>
            <person name="Levy A."/>
            <person name="Marchetto P."/>
            <person name="Ochoa K."/>
            <person name="Jackson S.M."/>
            <person name="Gillam B."/>
            <person name="Chen W."/>
            <person name="Yan L."/>
            <person name="Higginbotham J."/>
            <person name="Cardenas M."/>
            <person name="Waligorski J."/>
            <person name="Applebaum E."/>
            <person name="Phelps L."/>
            <person name="Falcone J."/>
            <person name="Kanchi K."/>
            <person name="Thane T."/>
            <person name="Scimone A."/>
            <person name="Thane N."/>
            <person name="Henke J."/>
            <person name="Wang T."/>
            <person name="Ruppert J."/>
            <person name="Shah N."/>
            <person name="Rotter K."/>
            <person name="Hodges J."/>
            <person name="Ingenthron E."/>
            <person name="Cordes M."/>
            <person name="Kohlberg S."/>
            <person name="Sgro J."/>
            <person name="Delgado B."/>
            <person name="Mead K."/>
            <person name="Chinwalla A."/>
            <person name="Leonard S."/>
            <person name="Crouse K."/>
            <person name="Collura K."/>
            <person name="Kudrna D."/>
            <person name="Currie J."/>
            <person name="He R."/>
            <person name="Angelova A."/>
            <person name="Rajasekar S."/>
            <person name="Mueller T."/>
            <person name="Lomeli R."/>
            <person name="Scara G."/>
            <person name="Ko A."/>
            <person name="Delaney K."/>
            <person name="Wissotski M."/>
            <person name="Lopez G."/>
            <person name="Campos D."/>
            <person name="Braidotti M."/>
            <person name="Ashley E."/>
            <person name="Golser W."/>
            <person name="Kim H."/>
            <person name="Lee S."/>
            <person name="Lin J."/>
            <person name="Dujmic Z."/>
            <person name="Kim W."/>
            <person name="Talag J."/>
            <person name="Zuccolo A."/>
            <person name="Fan C."/>
            <person name="Sebastian A."/>
            <person name="Kramer M."/>
            <person name="Spiegel L."/>
            <person name="Nascimento L."/>
            <person name="Zutavern T."/>
            <person name="Miller B."/>
            <person name="Ambroise C."/>
            <person name="Muller S."/>
            <person name="Spooner W."/>
            <person name="Narechania A."/>
            <person name="Ren L."/>
            <person name="Wei S."/>
            <person name="Kumari S."/>
            <person name="Faga B."/>
            <person name="Levy M.J."/>
            <person name="McMahan L."/>
            <person name="Van Buren P."/>
            <person name="Vaughn M.W."/>
            <person name="Ying K."/>
            <person name="Yeh C.-T."/>
            <person name="Emrich S.J."/>
            <person name="Jia Y."/>
            <person name="Kalyanaraman A."/>
            <person name="Hsia A.-P."/>
            <person name="Barbazuk W.B."/>
            <person name="Baucom R.S."/>
            <person name="Brutnell T.P."/>
            <person name="Carpita N.C."/>
            <person name="Chaparro C."/>
            <person name="Chia J.-M."/>
            <person name="Deragon J.-M."/>
            <person name="Estill J.C."/>
            <person name="Fu Y."/>
            <person name="Jeddeloh J.A."/>
            <person name="Han Y."/>
            <person name="Lee H."/>
            <person name="Li P."/>
            <person name="Lisch D.R."/>
            <person name="Liu S."/>
            <person name="Liu Z."/>
            <person name="Nagel D.H."/>
            <person name="McCann M.C."/>
            <person name="SanMiguel P."/>
            <person name="Myers A.M."/>
            <person name="Nettleton D."/>
            <person name="Nguyen J."/>
            <person name="Penning B.W."/>
            <person name="Ponnala L."/>
            <person name="Schneider K.L."/>
            <person name="Schwartz D.C."/>
            <person name="Sharma A."/>
            <person name="Soderlund C."/>
            <person name="Springer N.M."/>
            <person name="Sun Q."/>
            <person name="Wang H."/>
            <person name="Waterman M."/>
            <person name="Westerman R."/>
            <person name="Wolfgruber T.K."/>
            <person name="Yang L."/>
            <person name="Yu Y."/>
            <person name="Zhang L."/>
            <person name="Zhou S."/>
            <person name="Zhu Q."/>
            <person name="Bennetzen J.L."/>
            <person name="Dawe R.K."/>
            <person name="Jiang J."/>
            <person name="Jiang N."/>
            <person name="Presting G.G."/>
            <person name="Wessler S.R."/>
            <person name="Aluru S."/>
            <person name="Martienssen R.A."/>
            <person name="Clifton S.W."/>
            <person name="McCombie W.R."/>
            <person name="Wing R.A."/>
            <person name="Wilson R.K."/>
        </authorList>
    </citation>
    <scope>NUCLEOTIDE SEQUENCE [LARGE SCALE GENOMIC DNA]</scope>
    <source>
        <strain>cv. B73</strain>
    </source>
</reference>
<reference key="4">
    <citation type="journal article" date="2009" name="PLoS Genet.">
        <title>Sequencing, mapping, and analysis of 27,455 maize full-length cDNAs.</title>
        <authorList>
            <person name="Soderlund C."/>
            <person name="Descour A."/>
            <person name="Kudrna D."/>
            <person name="Bomhoff M."/>
            <person name="Boyd L."/>
            <person name="Currie J."/>
            <person name="Angelova A."/>
            <person name="Collura K."/>
            <person name="Wissotski M."/>
            <person name="Ashley E."/>
            <person name="Morrow D."/>
            <person name="Fernandes J."/>
            <person name="Walbot V."/>
            <person name="Yu Y."/>
        </authorList>
    </citation>
    <scope>NUCLEOTIDE SEQUENCE [LARGE SCALE MRNA]</scope>
    <source>
        <strain>cv. B73</strain>
    </source>
</reference>
<reference key="5">
    <citation type="journal article" date="2009" name="Plant Mol. Biol.">
        <title>Insights into corn genes derived from large-scale cDNA sequencing.</title>
        <authorList>
            <person name="Alexandrov N.N."/>
            <person name="Brover V.V."/>
            <person name="Freidin S."/>
            <person name="Troukhan M.E."/>
            <person name="Tatarinova T.V."/>
            <person name="Zhang H."/>
            <person name="Swaller T.J."/>
            <person name="Lu Y.-P."/>
            <person name="Bouck J."/>
            <person name="Flavell R.B."/>
            <person name="Feldmann K.A."/>
        </authorList>
    </citation>
    <scope>NUCLEOTIDE SEQUENCE [LARGE SCALE MRNA]</scope>
</reference>
<reference key="6">
    <citation type="journal article" date="1991" name="Plant Physiol.">
        <title>Molecular cloning and differential expression of the maize ferredoxin gene family.</title>
        <authorList>
            <person name="Hase T."/>
            <person name="Kimatsa Y."/>
            <person name="Yonekura K."/>
            <person name="Matsumura T."/>
            <person name="Sakakibara H."/>
        </authorList>
    </citation>
    <scope>PROTEIN SEQUENCE OF 45-64</scope>
</reference>
<protein>
    <recommendedName>
        <fullName evidence="5">Ferredoxin-2, chloroplastic</fullName>
    </recommendedName>
    <alternativeName>
        <fullName evidence="4">Ferredoxin II</fullName>
        <shortName evidence="4">Fd II</shortName>
    </alternativeName>
</protein>
<dbReference type="EMBL" id="AB016810">
    <property type="protein sequence ID" value="BAA32348.1"/>
    <property type="molecule type" value="mRNA"/>
</dbReference>
<dbReference type="EMBL" id="EU328186">
    <property type="protein sequence ID" value="ACA34368.1"/>
    <property type="molecule type" value="mRNA"/>
</dbReference>
<dbReference type="EMBL" id="BT039722">
    <property type="protein sequence ID" value="ACF84727.1"/>
    <property type="molecule type" value="mRNA"/>
</dbReference>
<dbReference type="EMBL" id="EU974838">
    <property type="protein sequence ID" value="ACG46956.1"/>
    <property type="molecule type" value="mRNA"/>
</dbReference>
<dbReference type="PIR" id="T01170">
    <property type="entry name" value="T01170"/>
</dbReference>
<dbReference type="RefSeq" id="NP_001104844.1">
    <property type="nucleotide sequence ID" value="NM_001111374.1"/>
</dbReference>
<dbReference type="SMR" id="O80429"/>
<dbReference type="STRING" id="4577.O80429"/>
<dbReference type="PaxDb" id="4577-GRMZM2G048313_P01"/>
<dbReference type="EnsemblPlants" id="Zm00001eb260160_T001">
    <property type="protein sequence ID" value="Zm00001eb260160_P001"/>
    <property type="gene ID" value="Zm00001eb260160"/>
</dbReference>
<dbReference type="GeneID" id="541619"/>
<dbReference type="Gramene" id="Zm00001eb260160_T001">
    <property type="protein sequence ID" value="Zm00001eb260160_P001"/>
    <property type="gene ID" value="Zm00001eb260160"/>
</dbReference>
<dbReference type="KEGG" id="zma:541619"/>
<dbReference type="MaizeGDB" id="66392"/>
<dbReference type="eggNOG" id="ENOG502S3RJ">
    <property type="taxonomic scope" value="Eukaryota"/>
</dbReference>
<dbReference type="HOGENOM" id="CLU_082632_1_1_1"/>
<dbReference type="InParanoid" id="O80429"/>
<dbReference type="OMA" id="AYPRSNC"/>
<dbReference type="OrthoDB" id="1885901at2759"/>
<dbReference type="Proteomes" id="UP000007305">
    <property type="component" value="Chromosome 6"/>
</dbReference>
<dbReference type="ExpressionAtlas" id="O80429">
    <property type="expression patterns" value="baseline and differential"/>
</dbReference>
<dbReference type="GO" id="GO:0009507">
    <property type="term" value="C:chloroplast"/>
    <property type="evidence" value="ECO:0000304"/>
    <property type="project" value="AgBase"/>
</dbReference>
<dbReference type="GO" id="GO:0009570">
    <property type="term" value="C:chloroplast stroma"/>
    <property type="evidence" value="ECO:0000318"/>
    <property type="project" value="GO_Central"/>
</dbReference>
<dbReference type="GO" id="GO:0051537">
    <property type="term" value="F:2 iron, 2 sulfur cluster binding"/>
    <property type="evidence" value="ECO:0007669"/>
    <property type="project" value="UniProtKB-KW"/>
</dbReference>
<dbReference type="GO" id="GO:0009055">
    <property type="term" value="F:electron transfer activity"/>
    <property type="evidence" value="ECO:0007669"/>
    <property type="project" value="InterPro"/>
</dbReference>
<dbReference type="GO" id="GO:0046872">
    <property type="term" value="F:metal ion binding"/>
    <property type="evidence" value="ECO:0007669"/>
    <property type="project" value="UniProtKB-KW"/>
</dbReference>
<dbReference type="GO" id="GO:0022900">
    <property type="term" value="P:electron transport chain"/>
    <property type="evidence" value="ECO:0007669"/>
    <property type="project" value="InterPro"/>
</dbReference>
<dbReference type="GO" id="GO:0015979">
    <property type="term" value="P:photosynthesis"/>
    <property type="evidence" value="ECO:0000304"/>
    <property type="project" value="AgBase"/>
</dbReference>
<dbReference type="GO" id="GO:0009416">
    <property type="term" value="P:response to light stimulus"/>
    <property type="evidence" value="ECO:0000304"/>
    <property type="project" value="AgBase"/>
</dbReference>
<dbReference type="CDD" id="cd00207">
    <property type="entry name" value="fer2"/>
    <property type="match status" value="1"/>
</dbReference>
<dbReference type="FunFam" id="3.10.20.30:FF:000014">
    <property type="entry name" value="Ferredoxin"/>
    <property type="match status" value="1"/>
</dbReference>
<dbReference type="Gene3D" id="3.10.20.30">
    <property type="match status" value="1"/>
</dbReference>
<dbReference type="InterPro" id="IPR036010">
    <property type="entry name" value="2Fe-2S_ferredoxin-like_sf"/>
</dbReference>
<dbReference type="InterPro" id="IPR001041">
    <property type="entry name" value="2Fe-2S_ferredoxin-type"/>
</dbReference>
<dbReference type="InterPro" id="IPR006058">
    <property type="entry name" value="2Fe2S_fd_BS"/>
</dbReference>
<dbReference type="InterPro" id="IPR012675">
    <property type="entry name" value="Beta-grasp_dom_sf"/>
</dbReference>
<dbReference type="InterPro" id="IPR010241">
    <property type="entry name" value="Fd_pln"/>
</dbReference>
<dbReference type="NCBIfam" id="TIGR02008">
    <property type="entry name" value="fdx_plant"/>
    <property type="match status" value="1"/>
</dbReference>
<dbReference type="PANTHER" id="PTHR43112">
    <property type="entry name" value="FERREDOXIN"/>
    <property type="match status" value="1"/>
</dbReference>
<dbReference type="PANTHER" id="PTHR43112:SF3">
    <property type="entry name" value="FERREDOXIN-2, CHLOROPLASTIC"/>
    <property type="match status" value="1"/>
</dbReference>
<dbReference type="Pfam" id="PF00111">
    <property type="entry name" value="Fer2"/>
    <property type="match status" value="1"/>
</dbReference>
<dbReference type="SUPFAM" id="SSF54292">
    <property type="entry name" value="2Fe-2S ferredoxin-like"/>
    <property type="match status" value="1"/>
</dbReference>
<dbReference type="PROSITE" id="PS00197">
    <property type="entry name" value="2FE2S_FER_1"/>
    <property type="match status" value="1"/>
</dbReference>
<dbReference type="PROSITE" id="PS51085">
    <property type="entry name" value="2FE2S_FER_2"/>
    <property type="match status" value="1"/>
</dbReference>
<proteinExistence type="evidence at protein level"/>
<feature type="transit peptide" description="Chloroplast" evidence="2">
    <location>
        <begin position="1"/>
        <end position="44"/>
    </location>
</feature>
<feature type="chain" id="PRO_0000433609" description="Ferredoxin-2, chloroplastic">
    <location>
        <begin position="45"/>
        <end position="140"/>
    </location>
</feature>
<feature type="domain" description="2Fe-2S ferredoxin-type" evidence="1">
    <location>
        <begin position="47"/>
        <end position="137"/>
    </location>
</feature>
<feature type="binding site" evidence="1">
    <location>
        <position position="83"/>
    </location>
    <ligand>
        <name>[2Fe-2S] cluster</name>
        <dbReference type="ChEBI" id="CHEBI:190135"/>
    </ligand>
</feature>
<feature type="binding site" evidence="1">
    <location>
        <position position="88"/>
    </location>
    <ligand>
        <name>[2Fe-2S] cluster</name>
        <dbReference type="ChEBI" id="CHEBI:190135"/>
    </ligand>
</feature>
<feature type="binding site" evidence="1">
    <location>
        <position position="91"/>
    </location>
    <ligand>
        <name>[2Fe-2S] cluster</name>
        <dbReference type="ChEBI" id="CHEBI:190135"/>
    </ligand>
</feature>
<feature type="binding site" evidence="1">
    <location>
        <position position="121"/>
    </location>
    <ligand>
        <name>[2Fe-2S] cluster</name>
        <dbReference type="ChEBI" id="CHEBI:190135"/>
    </ligand>
</feature>
<feature type="mutagenesis site" description="Increased affinity for Fd-NADP(+) oxidoreductase and increased electron-transfer activity." evidence="3">
    <original>N</original>
    <variation>D</variation>
    <location>
        <position position="109"/>
    </location>
</feature>
<feature type="sequence conflict" description="In Ref. 5; ACG46956." evidence="6" ref="5">
    <original>V</original>
    <variation>M</variation>
    <location>
        <position position="58"/>
    </location>
</feature>
<evidence type="ECO:0000255" key="1">
    <source>
        <dbReference type="PROSITE-ProRule" id="PRU00465"/>
    </source>
</evidence>
<evidence type="ECO:0000269" key="2">
    <source>
    </source>
</evidence>
<evidence type="ECO:0000269" key="3">
    <source>
    </source>
</evidence>
<evidence type="ECO:0000303" key="4">
    <source>
    </source>
</evidence>
<evidence type="ECO:0000303" key="5">
    <source ref="2"/>
</evidence>
<evidence type="ECO:0000305" key="6"/>
<comment type="function">
    <text evidence="3">Ferredoxins are iron-sulfur proteins that transfer electrons in a wide variety of metabolic reactions. Occupies a key position both for transferring the photoreducing power to Fd-NADP(+) oxidoreductase (FNR), hence the formation of NADPH, and for mediating the cyclic electron flow around photosystem I (PSI).</text>
</comment>
<comment type="cofactor">
    <cofactor evidence="6">
        <name>[2Fe-2S] cluster</name>
        <dbReference type="ChEBI" id="CHEBI:190135"/>
    </cofactor>
    <text>Binds 1 [2Fe-2S] cluster.</text>
</comment>
<comment type="biophysicochemical properties">
    <redoxPotential>
        <text evidence="3">E(0) is -406 mV.</text>
    </redoxPotential>
</comment>
<comment type="subcellular location">
    <subcellularLocation>
        <location evidence="3">Plastid</location>
        <location evidence="3">Chloroplast</location>
    </subcellularLocation>
</comment>
<comment type="tissue specificity">
    <text evidence="3">Expressed almost exclusively in bundle-sheath.</text>
</comment>
<comment type="similarity">
    <text evidence="6">Belongs to the 2Fe2S plant-type ferredoxin family.</text>
</comment>
<keyword id="KW-0001">2Fe-2S</keyword>
<keyword id="KW-0150">Chloroplast</keyword>
<keyword id="KW-0903">Direct protein sequencing</keyword>
<keyword id="KW-0249">Electron transport</keyword>
<keyword id="KW-0408">Iron</keyword>
<keyword id="KW-0411">Iron-sulfur</keyword>
<keyword id="KW-0479">Metal-binding</keyword>
<keyword id="KW-0934">Plastid</keyword>
<keyword id="KW-1185">Reference proteome</keyword>
<keyword id="KW-0809">Transit peptide</keyword>
<keyword id="KW-0813">Transport</keyword>
<name>FER2_MAIZE</name>
<sequence length="140" mass="15086">MAATALSMSILRAPPPCFSSPLRLRVAVAKPLAAPMRRQLLRAQATYNVKLITPEGEVELQVPDDVYILDFAEEEGIDLPFSCRAGSCSSCAGKVVSGSVDQSDQSFLNDNQVADGWVLTCAAYPTSDVVIETHKEDDLL</sequence>
<accession>O80429</accession>
<accession>B6UC73</accession>
<organism>
    <name type="scientific">Zea mays</name>
    <name type="common">Maize</name>
    <dbReference type="NCBI Taxonomy" id="4577"/>
    <lineage>
        <taxon>Eukaryota</taxon>
        <taxon>Viridiplantae</taxon>
        <taxon>Streptophyta</taxon>
        <taxon>Embryophyta</taxon>
        <taxon>Tracheophyta</taxon>
        <taxon>Spermatophyta</taxon>
        <taxon>Magnoliopsida</taxon>
        <taxon>Liliopsida</taxon>
        <taxon>Poales</taxon>
        <taxon>Poaceae</taxon>
        <taxon>PACMAD clade</taxon>
        <taxon>Panicoideae</taxon>
        <taxon>Andropogonodae</taxon>
        <taxon>Andropogoneae</taxon>
        <taxon>Tripsacinae</taxon>
        <taxon>Zea</taxon>
    </lineage>
</organism>